<organism>
    <name type="scientific">Pelodictyon phaeoclathratiforme (strain DSM 5477 / BU-1)</name>
    <dbReference type="NCBI Taxonomy" id="324925"/>
    <lineage>
        <taxon>Bacteria</taxon>
        <taxon>Pseudomonadati</taxon>
        <taxon>Chlorobiota</taxon>
        <taxon>Chlorobiia</taxon>
        <taxon>Chlorobiales</taxon>
        <taxon>Chlorobiaceae</taxon>
        <taxon>Chlorobium/Pelodictyon group</taxon>
        <taxon>Pelodictyon</taxon>
    </lineage>
</organism>
<gene>
    <name evidence="1" type="primary">atpD</name>
    <name type="ordered locus">Ppha_0048</name>
</gene>
<evidence type="ECO:0000255" key="1">
    <source>
        <dbReference type="HAMAP-Rule" id="MF_01347"/>
    </source>
</evidence>
<sequence length="462" mass="50363">MQEGKISQIIGPVVDVDFPEGRLPSILDALTVTRADGTKLVLETQQHLGEERVRTVAMESTDGLVRGMNVTHTGKPIQVPVGLEVLGRMLNVVGDPIDGRGPVNTKKSYSIHRLAPRFDEISTKAEMFETGIKVIDLLEPYSRGGKTGLFGGAGVGKTVLIMELINNIAKQQSGFSVFAGVGERTREGNDLWHEMMESGVIDKTALVFGQMNEPPGARQRVALTGLSIAEYFRDEEGRDVLLFIDNIFRFTQAGSEVSALLGRMPSAVGYQPTLATEMGELQDRIVSTKKGSVTSVQAIYVPADDLTDPAPATAFAHLDATTVLSRSIAELGIYPAVDPLDSTSRILDPNIVGDDHYDTAQAVKQLLQRYKDLQDIIAILGMDELSDEDKLVVSRARKVQRFLSQPFFVAEAFTGLAGKYVKLEETIKGFKEIIAGRHDNLPESAFYLVGTIEEAVEKAKTL</sequence>
<name>ATPB_PELPB</name>
<accession>B4SAN6</accession>
<dbReference type="EC" id="7.1.2.2" evidence="1"/>
<dbReference type="EMBL" id="CP001110">
    <property type="protein sequence ID" value="ACF42405.1"/>
    <property type="molecule type" value="Genomic_DNA"/>
</dbReference>
<dbReference type="RefSeq" id="WP_012506903.1">
    <property type="nucleotide sequence ID" value="NC_011060.1"/>
</dbReference>
<dbReference type="SMR" id="B4SAN6"/>
<dbReference type="STRING" id="324925.Ppha_0048"/>
<dbReference type="KEGG" id="pph:Ppha_0048"/>
<dbReference type="eggNOG" id="COG0055">
    <property type="taxonomic scope" value="Bacteria"/>
</dbReference>
<dbReference type="HOGENOM" id="CLU_022398_0_2_10"/>
<dbReference type="OrthoDB" id="9801639at2"/>
<dbReference type="Proteomes" id="UP000002724">
    <property type="component" value="Chromosome"/>
</dbReference>
<dbReference type="GO" id="GO:0005886">
    <property type="term" value="C:plasma membrane"/>
    <property type="evidence" value="ECO:0007669"/>
    <property type="project" value="UniProtKB-SubCell"/>
</dbReference>
<dbReference type="GO" id="GO:0045259">
    <property type="term" value="C:proton-transporting ATP synthase complex"/>
    <property type="evidence" value="ECO:0007669"/>
    <property type="project" value="UniProtKB-KW"/>
</dbReference>
<dbReference type="GO" id="GO:0005524">
    <property type="term" value="F:ATP binding"/>
    <property type="evidence" value="ECO:0007669"/>
    <property type="project" value="UniProtKB-UniRule"/>
</dbReference>
<dbReference type="GO" id="GO:0016887">
    <property type="term" value="F:ATP hydrolysis activity"/>
    <property type="evidence" value="ECO:0007669"/>
    <property type="project" value="InterPro"/>
</dbReference>
<dbReference type="GO" id="GO:0046933">
    <property type="term" value="F:proton-transporting ATP synthase activity, rotational mechanism"/>
    <property type="evidence" value="ECO:0007669"/>
    <property type="project" value="UniProtKB-UniRule"/>
</dbReference>
<dbReference type="CDD" id="cd18110">
    <property type="entry name" value="ATP-synt_F1_beta_C"/>
    <property type="match status" value="1"/>
</dbReference>
<dbReference type="CDD" id="cd18115">
    <property type="entry name" value="ATP-synt_F1_beta_N"/>
    <property type="match status" value="1"/>
</dbReference>
<dbReference type="CDD" id="cd01133">
    <property type="entry name" value="F1-ATPase_beta_CD"/>
    <property type="match status" value="1"/>
</dbReference>
<dbReference type="FunFam" id="1.10.1140.10:FF:000001">
    <property type="entry name" value="ATP synthase subunit beta"/>
    <property type="match status" value="1"/>
</dbReference>
<dbReference type="FunFam" id="2.40.10.170:FF:000005">
    <property type="entry name" value="ATP synthase subunit beta"/>
    <property type="match status" value="1"/>
</dbReference>
<dbReference type="FunFam" id="3.40.50.300:FF:000026">
    <property type="entry name" value="ATP synthase subunit beta"/>
    <property type="match status" value="1"/>
</dbReference>
<dbReference type="Gene3D" id="2.40.10.170">
    <property type="match status" value="1"/>
</dbReference>
<dbReference type="Gene3D" id="1.10.1140.10">
    <property type="entry name" value="Bovine Mitochondrial F1-atpase, Atp Synthase Beta Chain, Chain D, domain 3"/>
    <property type="match status" value="1"/>
</dbReference>
<dbReference type="Gene3D" id="3.40.50.300">
    <property type="entry name" value="P-loop containing nucleotide triphosphate hydrolases"/>
    <property type="match status" value="1"/>
</dbReference>
<dbReference type="HAMAP" id="MF_01347">
    <property type="entry name" value="ATP_synth_beta_bact"/>
    <property type="match status" value="1"/>
</dbReference>
<dbReference type="InterPro" id="IPR003593">
    <property type="entry name" value="AAA+_ATPase"/>
</dbReference>
<dbReference type="InterPro" id="IPR055190">
    <property type="entry name" value="ATP-synt_VA_C"/>
</dbReference>
<dbReference type="InterPro" id="IPR005722">
    <property type="entry name" value="ATP_synth_F1_bsu"/>
</dbReference>
<dbReference type="InterPro" id="IPR020003">
    <property type="entry name" value="ATPase_a/bsu_AS"/>
</dbReference>
<dbReference type="InterPro" id="IPR050053">
    <property type="entry name" value="ATPase_alpha/beta_chains"/>
</dbReference>
<dbReference type="InterPro" id="IPR004100">
    <property type="entry name" value="ATPase_F1/V1/A1_a/bsu_N"/>
</dbReference>
<dbReference type="InterPro" id="IPR036121">
    <property type="entry name" value="ATPase_F1/V1/A1_a/bsu_N_sf"/>
</dbReference>
<dbReference type="InterPro" id="IPR000194">
    <property type="entry name" value="ATPase_F1/V1/A1_a/bsu_nucl-bd"/>
</dbReference>
<dbReference type="InterPro" id="IPR024034">
    <property type="entry name" value="ATPase_F1/V1_b/a_C"/>
</dbReference>
<dbReference type="InterPro" id="IPR027417">
    <property type="entry name" value="P-loop_NTPase"/>
</dbReference>
<dbReference type="NCBIfam" id="TIGR01039">
    <property type="entry name" value="atpD"/>
    <property type="match status" value="1"/>
</dbReference>
<dbReference type="PANTHER" id="PTHR15184">
    <property type="entry name" value="ATP SYNTHASE"/>
    <property type="match status" value="1"/>
</dbReference>
<dbReference type="PANTHER" id="PTHR15184:SF71">
    <property type="entry name" value="ATP SYNTHASE SUBUNIT BETA, MITOCHONDRIAL"/>
    <property type="match status" value="1"/>
</dbReference>
<dbReference type="Pfam" id="PF00006">
    <property type="entry name" value="ATP-synt_ab"/>
    <property type="match status" value="1"/>
</dbReference>
<dbReference type="Pfam" id="PF02874">
    <property type="entry name" value="ATP-synt_ab_N"/>
    <property type="match status" value="1"/>
</dbReference>
<dbReference type="Pfam" id="PF22919">
    <property type="entry name" value="ATP-synt_VA_C"/>
    <property type="match status" value="1"/>
</dbReference>
<dbReference type="PIRSF" id="PIRSF039072">
    <property type="entry name" value="ATPase_subunit_beta"/>
    <property type="match status" value="1"/>
</dbReference>
<dbReference type="SMART" id="SM00382">
    <property type="entry name" value="AAA"/>
    <property type="match status" value="1"/>
</dbReference>
<dbReference type="SUPFAM" id="SSF47917">
    <property type="entry name" value="C-terminal domain of alpha and beta subunits of F1 ATP synthase"/>
    <property type="match status" value="1"/>
</dbReference>
<dbReference type="SUPFAM" id="SSF50615">
    <property type="entry name" value="N-terminal domain of alpha and beta subunits of F1 ATP synthase"/>
    <property type="match status" value="1"/>
</dbReference>
<dbReference type="SUPFAM" id="SSF52540">
    <property type="entry name" value="P-loop containing nucleoside triphosphate hydrolases"/>
    <property type="match status" value="1"/>
</dbReference>
<dbReference type="PROSITE" id="PS00152">
    <property type="entry name" value="ATPASE_ALPHA_BETA"/>
    <property type="match status" value="1"/>
</dbReference>
<feature type="chain" id="PRO_1000143529" description="ATP synthase subunit beta">
    <location>
        <begin position="1"/>
        <end position="462"/>
    </location>
</feature>
<feature type="binding site" evidence="1">
    <location>
        <begin position="151"/>
        <end position="158"/>
    </location>
    <ligand>
        <name>ATP</name>
        <dbReference type="ChEBI" id="CHEBI:30616"/>
    </ligand>
</feature>
<keyword id="KW-0066">ATP synthesis</keyword>
<keyword id="KW-0067">ATP-binding</keyword>
<keyword id="KW-0997">Cell inner membrane</keyword>
<keyword id="KW-1003">Cell membrane</keyword>
<keyword id="KW-0139">CF(1)</keyword>
<keyword id="KW-0375">Hydrogen ion transport</keyword>
<keyword id="KW-0406">Ion transport</keyword>
<keyword id="KW-0472">Membrane</keyword>
<keyword id="KW-0547">Nucleotide-binding</keyword>
<keyword id="KW-1185">Reference proteome</keyword>
<keyword id="KW-1278">Translocase</keyword>
<keyword id="KW-0813">Transport</keyword>
<protein>
    <recommendedName>
        <fullName evidence="1">ATP synthase subunit beta</fullName>
        <ecNumber evidence="1">7.1.2.2</ecNumber>
    </recommendedName>
    <alternativeName>
        <fullName evidence="1">ATP synthase F1 sector subunit beta</fullName>
    </alternativeName>
    <alternativeName>
        <fullName evidence="1">F-ATPase subunit beta</fullName>
    </alternativeName>
</protein>
<comment type="function">
    <text evidence="1">Produces ATP from ADP in the presence of a proton gradient across the membrane. The catalytic sites are hosted primarily by the beta subunits.</text>
</comment>
<comment type="catalytic activity">
    <reaction evidence="1">
        <text>ATP + H2O + 4 H(+)(in) = ADP + phosphate + 5 H(+)(out)</text>
        <dbReference type="Rhea" id="RHEA:57720"/>
        <dbReference type="ChEBI" id="CHEBI:15377"/>
        <dbReference type="ChEBI" id="CHEBI:15378"/>
        <dbReference type="ChEBI" id="CHEBI:30616"/>
        <dbReference type="ChEBI" id="CHEBI:43474"/>
        <dbReference type="ChEBI" id="CHEBI:456216"/>
        <dbReference type="EC" id="7.1.2.2"/>
    </reaction>
</comment>
<comment type="subunit">
    <text evidence="1">F-type ATPases have 2 components, CF(1) - the catalytic core - and CF(0) - the membrane proton channel. CF(1) has five subunits: alpha(3), beta(3), gamma(1), delta(1), epsilon(1). CF(0) has four main subunits: a(1), b(1), b'(1) and c(9-12).</text>
</comment>
<comment type="subcellular location">
    <subcellularLocation>
        <location evidence="1">Cell inner membrane</location>
        <topology evidence="1">Peripheral membrane protein</topology>
    </subcellularLocation>
</comment>
<comment type="similarity">
    <text evidence="1">Belongs to the ATPase alpha/beta chains family.</text>
</comment>
<proteinExistence type="inferred from homology"/>
<reference key="1">
    <citation type="submission" date="2008-06" db="EMBL/GenBank/DDBJ databases">
        <title>Complete sequence of Pelodictyon phaeoclathratiforme BU-1.</title>
        <authorList>
            <consortium name="US DOE Joint Genome Institute"/>
            <person name="Lucas S."/>
            <person name="Copeland A."/>
            <person name="Lapidus A."/>
            <person name="Glavina del Rio T."/>
            <person name="Dalin E."/>
            <person name="Tice H."/>
            <person name="Bruce D."/>
            <person name="Goodwin L."/>
            <person name="Pitluck S."/>
            <person name="Schmutz J."/>
            <person name="Larimer F."/>
            <person name="Land M."/>
            <person name="Hauser L."/>
            <person name="Kyrpides N."/>
            <person name="Mikhailova N."/>
            <person name="Liu Z."/>
            <person name="Li T."/>
            <person name="Zhao F."/>
            <person name="Overmann J."/>
            <person name="Bryant D.A."/>
            <person name="Richardson P."/>
        </authorList>
    </citation>
    <scope>NUCLEOTIDE SEQUENCE [LARGE SCALE GENOMIC DNA]</scope>
    <source>
        <strain>DSM 5477 / BU-1</strain>
    </source>
</reference>